<keyword id="KW-0903">Direct protein sequencing</keyword>
<keyword id="KW-0166">Nematocyst</keyword>
<keyword id="KW-0964">Secreted</keyword>
<keyword id="KW-0800">Toxin</keyword>
<accession>P84851</accession>
<sequence>RDFTHTIIDNSDLFSESRNTRLG</sequence>
<dbReference type="GO" id="GO:0005576">
    <property type="term" value="C:extracellular region"/>
    <property type="evidence" value="ECO:0007669"/>
    <property type="project" value="UniProtKB-SubCell"/>
</dbReference>
<dbReference type="GO" id="GO:0042151">
    <property type="term" value="C:nematocyst"/>
    <property type="evidence" value="ECO:0007669"/>
    <property type="project" value="UniProtKB-SubCell"/>
</dbReference>
<dbReference type="GO" id="GO:0090729">
    <property type="term" value="F:toxin activity"/>
    <property type="evidence" value="ECO:0007669"/>
    <property type="project" value="UniProtKB-KW"/>
</dbReference>
<comment type="function">
    <text evidence="1">Nephrotoxin. When injected intravenously in rats, causes severe destructive glomerular changes. At 24 hours post-injection partial disruption of the glomerular basement membrane, massive thrombus formation in glomerular capillaries, severe mesangiolysis and infiltrating cells were observed in the majority of glomeruli.</text>
</comment>
<comment type="subcellular location">
    <subcellularLocation>
        <location evidence="1">Secreted</location>
    </subcellularLocation>
    <subcellularLocation>
        <location evidence="1">Nematocyst</location>
    </subcellularLocation>
</comment>
<comment type="caution">
    <text evidence="3">The order of the peptides shown is unknown.</text>
</comment>
<proteinExistence type="evidence at protein level"/>
<evidence type="ECO:0000269" key="1">
    <source>
    </source>
</evidence>
<evidence type="ECO:0000303" key="2">
    <source>
    </source>
</evidence>
<evidence type="ECO:0000305" key="3"/>
<feature type="chain" id="PRO_0000235831" description="Nephrotoxin PsTX-115">
    <location>
        <begin position="1" status="less than"/>
        <end position="23" status="greater than"/>
    </location>
</feature>
<feature type="non-consecutive residues" evidence="3">
    <location>
        <begin position="12"/>
        <end position="13"/>
    </location>
</feature>
<feature type="non-terminal residue">
    <location>
        <position position="1"/>
    </location>
</feature>
<feature type="non-terminal residue">
    <location>
        <position position="23"/>
    </location>
</feature>
<organism>
    <name type="scientific">Phyllodiscus semoni</name>
    <name type="common">Night anemone</name>
    <dbReference type="NCBI Taxonomy" id="163701"/>
    <lineage>
        <taxon>Eukaryota</taxon>
        <taxon>Metazoa</taxon>
        <taxon>Cnidaria</taxon>
        <taxon>Anthozoa</taxon>
        <taxon>Hexacorallia</taxon>
        <taxon>Actiniaria</taxon>
        <taxon>Nynantheae</taxon>
        <taxon>Aliciidae</taxon>
        <taxon>Phyllodiscus</taxon>
    </lineage>
</organism>
<protein>
    <recommendedName>
        <fullName evidence="2">Nephrotoxin PsTX-115</fullName>
    </recommendedName>
    <alternativeName>
        <fullName evidence="2">115-kDa toxin from PsTX-T</fullName>
    </alternativeName>
</protein>
<reference key="1">
    <citation type="journal article" date="2007" name="Am. J. Pathol.">
        <title>A protein toxin from the sea anemone Phyllodiscus semoni targets the kidney and causes a severe renal injury with predominant glomerular endothelial damage.</title>
        <authorList>
            <person name="Mizuno M."/>
            <person name="Nozaki M."/>
            <person name="Morine N."/>
            <person name="Suzuki N."/>
            <person name="Nishikawa K."/>
            <person name="Morgan B.P."/>
            <person name="Matsuo S."/>
        </authorList>
    </citation>
    <scope>PROTEIN SEQUENCE</scope>
    <scope>FUNCTION</scope>
    <scope>SUBCELLULAR LOCATION</scope>
</reference>
<name>TX115_PHYSE</name>